<dbReference type="EMBL" id="AF440571">
    <property type="protein sequence ID" value="AAL27776.1"/>
    <property type="molecule type" value="Genomic_DNA"/>
</dbReference>
<dbReference type="RefSeq" id="NP_445730.1">
    <property type="nucleotide sequence ID" value="NC_003214.2"/>
</dbReference>
<dbReference type="GeneID" id="922342"/>
<dbReference type="KEGG" id="vg:922342"/>
<dbReference type="Proteomes" id="UP000007017">
    <property type="component" value="Segment"/>
</dbReference>
<protein>
    <recommendedName>
        <fullName>Uncharacterized protein 67</fullName>
    </recommendedName>
</protein>
<name>Y067_SIFVH</name>
<proteinExistence type="predicted"/>
<feature type="chain" id="PRO_0000385411" description="Uncharacterized protein 67">
    <location>
        <begin position="1"/>
        <end position="229"/>
    </location>
</feature>
<gene>
    <name type="primary">SIFV0067</name>
</gene>
<reference key="1">
    <citation type="journal article" date="2000" name="Virology">
        <title>A novel lipothrixvirus, SIFV, of the extremely thermophilic crenarchaeon Sulfolobus.</title>
        <authorList>
            <person name="Arnold H.P."/>
            <person name="Zillig W."/>
            <person name="Ziese U."/>
            <person name="Holz I."/>
            <person name="Crosby M."/>
            <person name="Utterback T."/>
            <person name="Weidmann J.F."/>
            <person name="Umayam L.A."/>
            <person name="Teffera K."/>
            <person name="Kristjanson J.K."/>
            <person name="Klenk H.P."/>
            <person name="Nelson K.E."/>
            <person name="Fraser C.M."/>
        </authorList>
    </citation>
    <scope>NUCLEOTIDE SEQUENCE [GENOMIC DNA]</scope>
</reference>
<keyword id="KW-1185">Reference proteome</keyword>
<sequence length="229" mass="27772">MVRYQDIVDDVYSKLFLLEQWKKVYPLTEYYDVYIDVCYGHRVRAFIQNLGFTLEQESFTIHIEYDLPCIPGLAEFLRLWNNFDLRGKYIYRATTKKYINEYVLAFTPFMIVNEPYEKENKYLSYWSVSPYTSNYFVRAYVERYGVNPKEIVVLVAPYDDRICSKDWYDNFSPEYTIIQDGKPTNFGDMRYLRELEVRCFKYSVSRLIYQLPYSDFLELMKLLPSKYVY</sequence>
<organism>
    <name type="scientific">Sulfolobus islandicus filamentous virus (isolate Iceland/Hveragerdi)</name>
    <name type="common">SIFV</name>
    <dbReference type="NCBI Taxonomy" id="654908"/>
    <lineage>
        <taxon>Viruses</taxon>
        <taxon>Adnaviria</taxon>
        <taxon>Zilligvirae</taxon>
        <taxon>Taleaviricota</taxon>
        <taxon>Tokiviricetes</taxon>
        <taxon>Ligamenvirales</taxon>
        <taxon>Lipothrixviridae</taxon>
        <taxon>Betalipothrixvirus</taxon>
        <taxon>Sulfolobus islandicus filamentous virus</taxon>
    </lineage>
</organism>
<accession>Q914G5</accession>
<organismHost>
    <name type="scientific">Saccharolobus islandicus</name>
    <name type="common">Sulfolobus islandicus</name>
    <dbReference type="NCBI Taxonomy" id="43080"/>
</organismHost>